<keyword id="KW-0002">3D-structure</keyword>
<keyword id="KW-0007">Acetylation</keyword>
<keyword id="KW-0963">Cytoplasm</keyword>
<keyword id="KW-0903">Direct protein sequencing</keyword>
<keyword id="KW-0445">Lipid transport</keyword>
<keyword id="KW-0446">Lipid-binding</keyword>
<keyword id="KW-0472">Membrane</keyword>
<keyword id="KW-1185">Reference proteome</keyword>
<keyword id="KW-0813">Transport</keyword>
<proteinExistence type="evidence at protein level"/>
<evidence type="ECO:0000250" key="1">
    <source>
        <dbReference type="UniProtKB" id="P50119"/>
    </source>
</evidence>
<evidence type="ECO:0000250" key="2">
    <source>
        <dbReference type="UniProtKB" id="P51161"/>
    </source>
</evidence>
<evidence type="ECO:0000250" key="3">
    <source>
        <dbReference type="UniProtKB" id="P51162"/>
    </source>
</evidence>
<evidence type="ECO:0000269" key="4">
    <source>
    </source>
</evidence>
<evidence type="ECO:0000269" key="5">
    <source>
    </source>
</evidence>
<evidence type="ECO:0000305" key="6"/>
<evidence type="ECO:0007829" key="7">
    <source>
        <dbReference type="PDB" id="1EAL"/>
    </source>
</evidence>
<sequence>MAFTGKYEIESEKNYDEFMKRLALPSDAIDKARNLKIISEVKQDGQNFTWSQQYPGGHSITNTFTIGKECDIETIGGKKFKATVQMEGGKVVVNSPNYHHTAEIVDGKLVEVSTVGGVTYERVSKKLA</sequence>
<name>FABP6_PIG</name>
<accession>P10289</accession>
<gene>
    <name type="primary">FABP6</name>
    <name type="synonym">ILBP</name>
    <name type="synonym">ILLBP</name>
</gene>
<feature type="initiator methionine" description="Removed" evidence="5">
    <location>
        <position position="1"/>
    </location>
</feature>
<feature type="chain" id="PRO_0000067382" description="Gastrotropin">
    <location>
        <begin position="2"/>
        <end position="128"/>
    </location>
</feature>
<feature type="modified residue" description="N-acetylalanine" evidence="5">
    <location>
        <position position="2"/>
    </location>
</feature>
<feature type="sequence conflict" description="In Ref. 2; AA sequence." evidence="6" ref="2">
    <original>T</original>
    <variation>S</variation>
    <location>
        <position position="119"/>
    </location>
</feature>
<feature type="strand" evidence="7">
    <location>
        <begin position="5"/>
        <end position="13"/>
    </location>
</feature>
<feature type="helix" evidence="7">
    <location>
        <begin position="17"/>
        <end position="22"/>
    </location>
</feature>
<feature type="helix" evidence="7">
    <location>
        <begin position="26"/>
        <end position="32"/>
    </location>
</feature>
<feature type="strand" evidence="7">
    <location>
        <begin position="37"/>
        <end position="53"/>
    </location>
</feature>
<feature type="strand" evidence="7">
    <location>
        <begin position="55"/>
        <end position="57"/>
    </location>
</feature>
<feature type="strand" evidence="7">
    <location>
        <begin position="59"/>
        <end position="68"/>
    </location>
</feature>
<feature type="strand" evidence="7">
    <location>
        <begin position="70"/>
        <end position="73"/>
    </location>
</feature>
<feature type="strand" evidence="7">
    <location>
        <begin position="75"/>
        <end position="77"/>
    </location>
</feature>
<feature type="strand" evidence="7">
    <location>
        <begin position="79"/>
        <end position="82"/>
    </location>
</feature>
<feature type="strand" evidence="7">
    <location>
        <begin position="88"/>
        <end position="93"/>
    </location>
</feature>
<feature type="strand" evidence="7">
    <location>
        <begin position="99"/>
        <end position="105"/>
    </location>
</feature>
<feature type="strand" evidence="7">
    <location>
        <begin position="108"/>
        <end position="115"/>
    </location>
</feature>
<feature type="strand" evidence="7">
    <location>
        <begin position="122"/>
        <end position="126"/>
    </location>
</feature>
<dbReference type="EMBL" id="J05136">
    <property type="protein sequence ID" value="AAA77657.1"/>
    <property type="status" value="ALT_INIT"/>
    <property type="molecule type" value="mRNA"/>
</dbReference>
<dbReference type="PIR" id="A32675">
    <property type="entry name" value="A32675"/>
</dbReference>
<dbReference type="RefSeq" id="NP_999380.2">
    <property type="nucleotide sequence ID" value="NM_214215.2"/>
</dbReference>
<dbReference type="PDB" id="1EAL">
    <property type="method" value="NMR"/>
    <property type="chains" value="A=2-128"/>
</dbReference>
<dbReference type="PDB" id="1EIO">
    <property type="method" value="NMR"/>
    <property type="chains" value="A=2-128"/>
</dbReference>
<dbReference type="PDBsum" id="1EAL"/>
<dbReference type="PDBsum" id="1EIO"/>
<dbReference type="BMRB" id="P10289"/>
<dbReference type="SMR" id="P10289"/>
<dbReference type="FunCoup" id="P10289">
    <property type="interactions" value="363"/>
</dbReference>
<dbReference type="STRING" id="9823.ENSSSCP00000018050"/>
<dbReference type="iPTMnet" id="P10289"/>
<dbReference type="PaxDb" id="9823-ENSSSCP00000018050"/>
<dbReference type="PeptideAtlas" id="P10289"/>
<dbReference type="GeneID" id="397423"/>
<dbReference type="KEGG" id="ssc:397423"/>
<dbReference type="CTD" id="2172"/>
<dbReference type="eggNOG" id="KOG4015">
    <property type="taxonomic scope" value="Eukaryota"/>
</dbReference>
<dbReference type="InParanoid" id="P10289"/>
<dbReference type="OrthoDB" id="10016075at2759"/>
<dbReference type="EvolutionaryTrace" id="P10289"/>
<dbReference type="Proteomes" id="UP000008227">
    <property type="component" value="Unplaced"/>
</dbReference>
<dbReference type="Proteomes" id="UP000314985">
    <property type="component" value="Unplaced"/>
</dbReference>
<dbReference type="Proteomes" id="UP000694570">
    <property type="component" value="Unplaced"/>
</dbReference>
<dbReference type="Proteomes" id="UP000694571">
    <property type="component" value="Unplaced"/>
</dbReference>
<dbReference type="Proteomes" id="UP000694720">
    <property type="component" value="Unplaced"/>
</dbReference>
<dbReference type="Proteomes" id="UP000694722">
    <property type="component" value="Unplaced"/>
</dbReference>
<dbReference type="Proteomes" id="UP000694723">
    <property type="component" value="Unplaced"/>
</dbReference>
<dbReference type="Proteomes" id="UP000694724">
    <property type="component" value="Unplaced"/>
</dbReference>
<dbReference type="Proteomes" id="UP000694725">
    <property type="component" value="Unplaced"/>
</dbReference>
<dbReference type="Proteomes" id="UP000694726">
    <property type="component" value="Unplaced"/>
</dbReference>
<dbReference type="Proteomes" id="UP000694727">
    <property type="component" value="Unplaced"/>
</dbReference>
<dbReference type="Proteomes" id="UP000694728">
    <property type="component" value="Unplaced"/>
</dbReference>
<dbReference type="GO" id="GO:0005829">
    <property type="term" value="C:cytosol"/>
    <property type="evidence" value="ECO:0000318"/>
    <property type="project" value="GO_Central"/>
</dbReference>
<dbReference type="GO" id="GO:0016020">
    <property type="term" value="C:membrane"/>
    <property type="evidence" value="ECO:0007669"/>
    <property type="project" value="UniProtKB-SubCell"/>
</dbReference>
<dbReference type="GO" id="GO:0005634">
    <property type="term" value="C:nucleus"/>
    <property type="evidence" value="ECO:0000318"/>
    <property type="project" value="GO_Central"/>
</dbReference>
<dbReference type="GO" id="GO:0005504">
    <property type="term" value="F:fatty acid binding"/>
    <property type="evidence" value="ECO:0000318"/>
    <property type="project" value="GO_Central"/>
</dbReference>
<dbReference type="GO" id="GO:0015908">
    <property type="term" value="P:fatty acid transport"/>
    <property type="evidence" value="ECO:0000318"/>
    <property type="project" value="GO_Central"/>
</dbReference>
<dbReference type="CDD" id="cd19446">
    <property type="entry name" value="FABP6"/>
    <property type="match status" value="1"/>
</dbReference>
<dbReference type="FunFam" id="2.40.128.20:FF:000006">
    <property type="entry name" value="Fatty acid-binding protein, liver"/>
    <property type="match status" value="1"/>
</dbReference>
<dbReference type="Gene3D" id="2.40.128.20">
    <property type="match status" value="1"/>
</dbReference>
<dbReference type="InterPro" id="IPR012674">
    <property type="entry name" value="Calycin"/>
</dbReference>
<dbReference type="InterPro" id="IPR000463">
    <property type="entry name" value="Fatty_acid-bd"/>
</dbReference>
<dbReference type="InterPro" id="IPR031259">
    <property type="entry name" value="ILBP"/>
</dbReference>
<dbReference type="PANTHER" id="PTHR11955">
    <property type="entry name" value="FATTY ACID BINDING PROTEIN"/>
    <property type="match status" value="1"/>
</dbReference>
<dbReference type="Pfam" id="PF14651">
    <property type="entry name" value="Lipocalin_7"/>
    <property type="match status" value="1"/>
</dbReference>
<dbReference type="PRINTS" id="PR00178">
    <property type="entry name" value="FATTYACIDBP"/>
</dbReference>
<dbReference type="SUPFAM" id="SSF50814">
    <property type="entry name" value="Lipocalins"/>
    <property type="match status" value="1"/>
</dbReference>
<dbReference type="PROSITE" id="PS00214">
    <property type="entry name" value="FABP"/>
    <property type="match status" value="1"/>
</dbReference>
<reference key="1">
    <citation type="journal article" date="1989" name="J. Biol. Chem.">
        <title>Gastrotropin: not an enterooxyntin but a member of a family of cytoplasmic hydrophobic ligand binding proteins.</title>
        <authorList>
            <person name="Gantz I."/>
            <person name="Nothwehr S.F."/>
            <person name="Lucey M."/>
            <person name="Sacchettini J.C."/>
            <person name="Delvalle J."/>
            <person name="Banaszak L.J."/>
            <person name="Naud M."/>
            <person name="Gordon J.I."/>
            <person name="Yamada T."/>
        </authorList>
    </citation>
    <scope>NUCLEOTIDE SEQUENCE [MRNA]</scope>
</reference>
<reference key="2">
    <citation type="journal article" date="1988" name="J. Biol. Chem.">
        <title>The complete amino acid sequence of porcine gastrotropin, an ileal protein which stimulates gastric acid and pepsinogen secretion.</title>
        <authorList>
            <person name="Walz D.A."/>
            <person name="Wider M.D."/>
            <person name="Snow J.W."/>
            <person name="Dass C."/>
            <person name="Desiderio D.M."/>
        </authorList>
    </citation>
    <scope>PROTEIN SEQUENCE OF 2-128</scope>
    <scope>ACETYLATION AT ALA-2</scope>
    <scope>FUNCTION</scope>
</reference>
<reference key="3">
    <citation type="journal article" date="1996" name="Structure">
        <title>Flexibility is a likely determinant of binding specificity in the case of ileal lipid binding protein.</title>
        <authorList>
            <person name="Luecke C."/>
            <person name="Zhang F."/>
            <person name="Rueterjans H."/>
            <person name="Hamilton J.A."/>
            <person name="Sacchettini J.C."/>
        </authorList>
    </citation>
    <scope>STRUCTURE BY NMR IN COMPLEX WITH BILE ACID</scope>
</reference>
<reference key="4">
    <citation type="journal article" date="2000" name="Eur. J. Biochem.">
        <title>Solution structure of ileal lipid binding protein in complex with glycocholate.</title>
        <authorList>
            <person name="Luecke C."/>
            <person name="Zhang F."/>
            <person name="Hamilton J.A."/>
            <person name="Sacchettini J.C."/>
            <person name="Rueterjans H."/>
        </authorList>
    </citation>
    <scope>STRUCTURE BY NMR</scope>
    <scope>BILE ACID-BINDING</scope>
    <scope>DOMAIN</scope>
</reference>
<comment type="function">
    <text evidence="3 4 5">Binds to bile acids and is involved in enterohepatic bile acid metabolism. Required for efficient apical to basolateral transport of conjugated bile acids in ileal enterocytes (By similarity). Stimulates gastric acid and pepsinogen secretion.</text>
</comment>
<comment type="subcellular location">
    <subcellularLocation>
        <location>Cytoplasm</location>
    </subcellularLocation>
    <subcellularLocation>
        <location>Membrane</location>
        <topology evidence="1">Peripheral membrane protein</topology>
        <orientation evidence="1">Cytoplasmic side</orientation>
    </subcellularLocation>
</comment>
<comment type="tissue specificity">
    <text>Found exclusively in the ileum and to a lesser extent in distal jejunum.</text>
</comment>
<comment type="domain">
    <text evidence="2 4">Forms a beta-barrel structure that accommodates the hydrophobic ligand in its interior. Can bind at least two ligands per molecule, however, the stoichiometry is debated.</text>
</comment>
<comment type="similarity">
    <text evidence="6">Belongs to the calycin superfamily. Fatty-acid binding protein (FABP) family.</text>
</comment>
<comment type="sequence caution" evidence="6">
    <conflict type="erroneous initiation">
        <sequence resource="EMBL-CDS" id="AAA77657"/>
    </conflict>
</comment>
<protein>
    <recommendedName>
        <fullName>Gastrotropin</fullName>
        <shortName>GT</shortName>
    </recommendedName>
    <alternativeName>
        <fullName>Fatty acid-binding protein 6</fullName>
    </alternativeName>
    <alternativeName>
        <fullName>Ileal lipid-binding protein</fullName>
        <shortName>ILBP</shortName>
    </alternativeName>
    <alternativeName>
        <fullName>Porcine ileal peptide</fullName>
        <shortName>PIP</shortName>
    </alternativeName>
</protein>
<organism>
    <name type="scientific">Sus scrofa</name>
    <name type="common">Pig</name>
    <dbReference type="NCBI Taxonomy" id="9823"/>
    <lineage>
        <taxon>Eukaryota</taxon>
        <taxon>Metazoa</taxon>
        <taxon>Chordata</taxon>
        <taxon>Craniata</taxon>
        <taxon>Vertebrata</taxon>
        <taxon>Euteleostomi</taxon>
        <taxon>Mammalia</taxon>
        <taxon>Eutheria</taxon>
        <taxon>Laurasiatheria</taxon>
        <taxon>Artiodactyla</taxon>
        <taxon>Suina</taxon>
        <taxon>Suidae</taxon>
        <taxon>Sus</taxon>
    </lineage>
</organism>